<proteinExistence type="evidence at transcript level"/>
<accession>Q9SCM4</accession>
<dbReference type="EMBL" id="AL133248">
    <property type="protein sequence ID" value="CAB66105.1"/>
    <property type="molecule type" value="Genomic_DNA"/>
</dbReference>
<dbReference type="EMBL" id="CP002686">
    <property type="protein sequence ID" value="AEE79661.1"/>
    <property type="molecule type" value="Genomic_DNA"/>
</dbReference>
<dbReference type="EMBL" id="CP002686">
    <property type="protein sequence ID" value="ANM65501.1"/>
    <property type="molecule type" value="Genomic_DNA"/>
</dbReference>
<dbReference type="EMBL" id="AK119096">
    <property type="protein sequence ID" value="BAC43669.1"/>
    <property type="molecule type" value="mRNA"/>
</dbReference>
<dbReference type="EMBL" id="BT006223">
    <property type="protein sequence ID" value="AAP12872.1"/>
    <property type="molecule type" value="mRNA"/>
</dbReference>
<dbReference type="PIR" id="T46184">
    <property type="entry name" value="T46184"/>
</dbReference>
<dbReference type="RefSeq" id="NP_001319783.1">
    <property type="nucleotide sequence ID" value="NM_001339875.1"/>
</dbReference>
<dbReference type="RefSeq" id="NP_191307.1">
    <property type="nucleotide sequence ID" value="NM_115608.5"/>
</dbReference>
<dbReference type="SMR" id="Q9SCM4"/>
<dbReference type="BioGRID" id="10231">
    <property type="interactions" value="7"/>
</dbReference>
<dbReference type="FunCoup" id="Q9SCM4">
    <property type="interactions" value="3181"/>
</dbReference>
<dbReference type="IntAct" id="Q9SCM4">
    <property type="interactions" value="7"/>
</dbReference>
<dbReference type="STRING" id="3702.Q9SCM4"/>
<dbReference type="PaxDb" id="3702-AT3G57480.1"/>
<dbReference type="ProteomicsDB" id="226668"/>
<dbReference type="EnsemblPlants" id="AT3G57480.1">
    <property type="protein sequence ID" value="AT3G57480.1"/>
    <property type="gene ID" value="AT3G57480"/>
</dbReference>
<dbReference type="EnsemblPlants" id="AT3G57480.2">
    <property type="protein sequence ID" value="AT3G57480.2"/>
    <property type="gene ID" value="AT3G57480"/>
</dbReference>
<dbReference type="GeneID" id="824915"/>
<dbReference type="Gramene" id="AT3G57480.1">
    <property type="protein sequence ID" value="AT3G57480.1"/>
    <property type="gene ID" value="AT3G57480"/>
</dbReference>
<dbReference type="Gramene" id="AT3G57480.2">
    <property type="protein sequence ID" value="AT3G57480.2"/>
    <property type="gene ID" value="AT3G57480"/>
</dbReference>
<dbReference type="KEGG" id="ath:AT3G57480"/>
<dbReference type="Araport" id="AT3G57480"/>
<dbReference type="TAIR" id="AT3G57480">
    <property type="gene designation" value="SAP13"/>
</dbReference>
<dbReference type="eggNOG" id="KOG3183">
    <property type="taxonomic scope" value="Eukaryota"/>
</dbReference>
<dbReference type="HOGENOM" id="CLU_061621_1_0_1"/>
<dbReference type="InParanoid" id="Q9SCM4"/>
<dbReference type="OMA" id="VPRCRES"/>
<dbReference type="PhylomeDB" id="Q9SCM4"/>
<dbReference type="PRO" id="PR:Q9SCM4"/>
<dbReference type="Proteomes" id="UP000006548">
    <property type="component" value="Chromosome 3"/>
</dbReference>
<dbReference type="ExpressionAtlas" id="Q9SCM4">
    <property type="expression patterns" value="baseline and differential"/>
</dbReference>
<dbReference type="GO" id="GO:0005737">
    <property type="term" value="C:cytoplasm"/>
    <property type="evidence" value="ECO:0000314"/>
    <property type="project" value="TAIR"/>
</dbReference>
<dbReference type="GO" id="GO:0005634">
    <property type="term" value="C:nucleus"/>
    <property type="evidence" value="ECO:0000314"/>
    <property type="project" value="TAIR"/>
</dbReference>
<dbReference type="GO" id="GO:0000976">
    <property type="term" value="F:transcription cis-regulatory region binding"/>
    <property type="evidence" value="ECO:0000353"/>
    <property type="project" value="TAIR"/>
</dbReference>
<dbReference type="GO" id="GO:0008270">
    <property type="term" value="F:zinc ion binding"/>
    <property type="evidence" value="ECO:0007669"/>
    <property type="project" value="UniProtKB-KW"/>
</dbReference>
<dbReference type="GO" id="GO:0009737">
    <property type="term" value="P:response to abscisic acid"/>
    <property type="evidence" value="ECO:0000315"/>
    <property type="project" value="TAIR"/>
</dbReference>
<dbReference type="GO" id="GO:0009651">
    <property type="term" value="P:response to salt stress"/>
    <property type="evidence" value="ECO:0000315"/>
    <property type="project" value="TAIR"/>
</dbReference>
<dbReference type="GO" id="GO:0097501">
    <property type="term" value="P:stress response to metal ion"/>
    <property type="evidence" value="ECO:0000315"/>
    <property type="project" value="TAIR"/>
</dbReference>
<dbReference type="FunFam" id="4.10.1110.10:FF:000003">
    <property type="entry name" value="AN1-type zinc finger protein 2B isoform X1"/>
    <property type="match status" value="1"/>
</dbReference>
<dbReference type="FunFam" id="4.10.1110.10:FF:000010">
    <property type="entry name" value="Zinc finger AN1 domain-containing stress-associated protein 12"/>
    <property type="match status" value="1"/>
</dbReference>
<dbReference type="Gene3D" id="4.10.1110.10">
    <property type="entry name" value="AN1-like Zinc finger"/>
    <property type="match status" value="2"/>
</dbReference>
<dbReference type="InterPro" id="IPR035896">
    <property type="entry name" value="AN1-like_Znf"/>
</dbReference>
<dbReference type="InterPro" id="IPR000058">
    <property type="entry name" value="Znf_AN1"/>
</dbReference>
<dbReference type="InterPro" id="IPR013087">
    <property type="entry name" value="Znf_C2H2_type"/>
</dbReference>
<dbReference type="PANTHER" id="PTHR14677">
    <property type="entry name" value="ARSENITE INDUCUBLE RNA ASSOCIATED PROTEIN AIP-1-RELATED"/>
    <property type="match status" value="1"/>
</dbReference>
<dbReference type="PANTHER" id="PTHR14677:SF36">
    <property type="entry name" value="ZINC FINGER AN1 AND C2H2 DOMAIN-CONTAINING STRESS-ASSOCIATED PROTEIN 13-RELATED"/>
    <property type="match status" value="1"/>
</dbReference>
<dbReference type="Pfam" id="PF01428">
    <property type="entry name" value="zf-AN1"/>
    <property type="match status" value="2"/>
</dbReference>
<dbReference type="Pfam" id="PF25403">
    <property type="entry name" value="zf-C2H2_ZFAND2"/>
    <property type="match status" value="1"/>
</dbReference>
<dbReference type="SMART" id="SM00154">
    <property type="entry name" value="ZnF_AN1"/>
    <property type="match status" value="2"/>
</dbReference>
<dbReference type="SUPFAM" id="SSF118310">
    <property type="entry name" value="AN1-like Zinc finger"/>
    <property type="match status" value="2"/>
</dbReference>
<dbReference type="PROSITE" id="PS51039">
    <property type="entry name" value="ZF_AN1"/>
    <property type="match status" value="2"/>
</dbReference>
<dbReference type="PROSITE" id="PS00028">
    <property type="entry name" value="ZINC_FINGER_C2H2_1"/>
    <property type="match status" value="1"/>
</dbReference>
<dbReference type="PROSITE" id="PS50157">
    <property type="entry name" value="ZINC_FINGER_C2H2_2"/>
    <property type="match status" value="1"/>
</dbReference>
<name>SAP13_ARATH</name>
<sequence length="249" mass="27760">MGTPEFPDLGKHCSVDYCKQIDFLPFTCDRCLQVYCLDHRSYMKHDCPKGNRGDVTVVICPLCAKGVRLNPDEDPNITWEKHVNTDCDPSNYEKAVKKKKCPVPRCRELLTFSNTIKCRDCSIDHCLKHRFGPDHSCSGPKKPESSFSFMGFLSTNTKEAPASSSSSSRWSSLFASAEASISRLGNDISQKLQFASGNDGNSEKTQERNGKQNCGKVTVDVCPKCSRGFRDPVDLLKHIDKDHRGTSKA</sequence>
<keyword id="KW-0479">Metal-binding</keyword>
<keyword id="KW-1185">Reference proteome</keyword>
<keyword id="KW-0677">Repeat</keyword>
<keyword id="KW-0862">Zinc</keyword>
<keyword id="KW-0863">Zinc-finger</keyword>
<protein>
    <recommendedName>
        <fullName>Zinc finger AN1 and C2H2 domain-containing stress-associated protein 13</fullName>
        <shortName>AtSAP13</shortName>
    </recommendedName>
</protein>
<reference key="1">
    <citation type="journal article" date="2000" name="Nature">
        <title>Sequence and analysis of chromosome 3 of the plant Arabidopsis thaliana.</title>
        <authorList>
            <person name="Salanoubat M."/>
            <person name="Lemcke K."/>
            <person name="Rieger M."/>
            <person name="Ansorge W."/>
            <person name="Unseld M."/>
            <person name="Fartmann B."/>
            <person name="Valle G."/>
            <person name="Bloecker H."/>
            <person name="Perez-Alonso M."/>
            <person name="Obermaier B."/>
            <person name="Delseny M."/>
            <person name="Boutry M."/>
            <person name="Grivell L.A."/>
            <person name="Mache R."/>
            <person name="Puigdomenech P."/>
            <person name="De Simone V."/>
            <person name="Choisne N."/>
            <person name="Artiguenave F."/>
            <person name="Robert C."/>
            <person name="Brottier P."/>
            <person name="Wincker P."/>
            <person name="Cattolico L."/>
            <person name="Weissenbach J."/>
            <person name="Saurin W."/>
            <person name="Quetier F."/>
            <person name="Schaefer M."/>
            <person name="Mueller-Auer S."/>
            <person name="Gabel C."/>
            <person name="Fuchs M."/>
            <person name="Benes V."/>
            <person name="Wurmbach E."/>
            <person name="Drzonek H."/>
            <person name="Erfle H."/>
            <person name="Jordan N."/>
            <person name="Bangert S."/>
            <person name="Wiedelmann R."/>
            <person name="Kranz H."/>
            <person name="Voss H."/>
            <person name="Holland R."/>
            <person name="Brandt P."/>
            <person name="Nyakatura G."/>
            <person name="Vezzi A."/>
            <person name="D'Angelo M."/>
            <person name="Pallavicini A."/>
            <person name="Toppo S."/>
            <person name="Simionati B."/>
            <person name="Conrad A."/>
            <person name="Hornischer K."/>
            <person name="Kauer G."/>
            <person name="Loehnert T.-H."/>
            <person name="Nordsiek G."/>
            <person name="Reichelt J."/>
            <person name="Scharfe M."/>
            <person name="Schoen O."/>
            <person name="Bargues M."/>
            <person name="Terol J."/>
            <person name="Climent J."/>
            <person name="Navarro P."/>
            <person name="Collado C."/>
            <person name="Perez-Perez A."/>
            <person name="Ottenwaelder B."/>
            <person name="Duchemin D."/>
            <person name="Cooke R."/>
            <person name="Laudie M."/>
            <person name="Berger-Llauro C."/>
            <person name="Purnelle B."/>
            <person name="Masuy D."/>
            <person name="de Haan M."/>
            <person name="Maarse A.C."/>
            <person name="Alcaraz J.-P."/>
            <person name="Cottet A."/>
            <person name="Casacuberta E."/>
            <person name="Monfort A."/>
            <person name="Argiriou A."/>
            <person name="Flores M."/>
            <person name="Liguori R."/>
            <person name="Vitale D."/>
            <person name="Mannhaupt G."/>
            <person name="Haase D."/>
            <person name="Schoof H."/>
            <person name="Rudd S."/>
            <person name="Zaccaria P."/>
            <person name="Mewes H.-W."/>
            <person name="Mayer K.F.X."/>
            <person name="Kaul S."/>
            <person name="Town C.D."/>
            <person name="Koo H.L."/>
            <person name="Tallon L.J."/>
            <person name="Jenkins J."/>
            <person name="Rooney T."/>
            <person name="Rizzo M."/>
            <person name="Walts A."/>
            <person name="Utterback T."/>
            <person name="Fujii C.Y."/>
            <person name="Shea T.P."/>
            <person name="Creasy T.H."/>
            <person name="Haas B."/>
            <person name="Maiti R."/>
            <person name="Wu D."/>
            <person name="Peterson J."/>
            <person name="Van Aken S."/>
            <person name="Pai G."/>
            <person name="Militscher J."/>
            <person name="Sellers P."/>
            <person name="Gill J.E."/>
            <person name="Feldblyum T.V."/>
            <person name="Preuss D."/>
            <person name="Lin X."/>
            <person name="Nierman W.C."/>
            <person name="Salzberg S.L."/>
            <person name="White O."/>
            <person name="Venter J.C."/>
            <person name="Fraser C.M."/>
            <person name="Kaneko T."/>
            <person name="Nakamura Y."/>
            <person name="Sato S."/>
            <person name="Kato T."/>
            <person name="Asamizu E."/>
            <person name="Sasamoto S."/>
            <person name="Kimura T."/>
            <person name="Idesawa K."/>
            <person name="Kawashima K."/>
            <person name="Kishida Y."/>
            <person name="Kiyokawa C."/>
            <person name="Kohara M."/>
            <person name="Matsumoto M."/>
            <person name="Matsuno A."/>
            <person name="Muraki A."/>
            <person name="Nakayama S."/>
            <person name="Nakazaki N."/>
            <person name="Shinpo S."/>
            <person name="Takeuchi C."/>
            <person name="Wada T."/>
            <person name="Watanabe A."/>
            <person name="Yamada M."/>
            <person name="Yasuda M."/>
            <person name="Tabata S."/>
        </authorList>
    </citation>
    <scope>NUCLEOTIDE SEQUENCE [LARGE SCALE GENOMIC DNA]</scope>
    <source>
        <strain>cv. Columbia</strain>
    </source>
</reference>
<reference key="2">
    <citation type="journal article" date="2017" name="Plant J.">
        <title>Araport11: a complete reannotation of the Arabidopsis thaliana reference genome.</title>
        <authorList>
            <person name="Cheng C.Y."/>
            <person name="Krishnakumar V."/>
            <person name="Chan A.P."/>
            <person name="Thibaud-Nissen F."/>
            <person name="Schobel S."/>
            <person name="Town C.D."/>
        </authorList>
    </citation>
    <scope>GENOME REANNOTATION</scope>
    <source>
        <strain>cv. Columbia</strain>
    </source>
</reference>
<reference key="3">
    <citation type="journal article" date="2002" name="Science">
        <title>Functional annotation of a full-length Arabidopsis cDNA collection.</title>
        <authorList>
            <person name="Seki M."/>
            <person name="Narusaka M."/>
            <person name="Kamiya A."/>
            <person name="Ishida J."/>
            <person name="Satou M."/>
            <person name="Sakurai T."/>
            <person name="Nakajima M."/>
            <person name="Enju A."/>
            <person name="Akiyama K."/>
            <person name="Oono Y."/>
            <person name="Muramatsu M."/>
            <person name="Hayashizaki Y."/>
            <person name="Kawai J."/>
            <person name="Carninci P."/>
            <person name="Itoh M."/>
            <person name="Ishii Y."/>
            <person name="Arakawa T."/>
            <person name="Shibata K."/>
            <person name="Shinagawa A."/>
            <person name="Shinozaki K."/>
        </authorList>
    </citation>
    <scope>NUCLEOTIDE SEQUENCE [LARGE SCALE MRNA]</scope>
    <source>
        <strain>cv. Columbia</strain>
    </source>
</reference>
<reference key="4">
    <citation type="journal article" date="2003" name="Science">
        <title>Empirical analysis of transcriptional activity in the Arabidopsis genome.</title>
        <authorList>
            <person name="Yamada K."/>
            <person name="Lim J."/>
            <person name="Dale J.M."/>
            <person name="Chen H."/>
            <person name="Shinn P."/>
            <person name="Palm C.J."/>
            <person name="Southwick A.M."/>
            <person name="Wu H.C."/>
            <person name="Kim C.J."/>
            <person name="Nguyen M."/>
            <person name="Pham P.K."/>
            <person name="Cheuk R.F."/>
            <person name="Karlin-Newmann G."/>
            <person name="Liu S.X."/>
            <person name="Lam B."/>
            <person name="Sakano H."/>
            <person name="Wu T."/>
            <person name="Yu G."/>
            <person name="Miranda M."/>
            <person name="Quach H.L."/>
            <person name="Tripp M."/>
            <person name="Chang C.H."/>
            <person name="Lee J.M."/>
            <person name="Toriumi M.J."/>
            <person name="Chan M.M."/>
            <person name="Tang C.C."/>
            <person name="Onodera C.S."/>
            <person name="Deng J.M."/>
            <person name="Akiyama K."/>
            <person name="Ansari Y."/>
            <person name="Arakawa T."/>
            <person name="Banh J."/>
            <person name="Banno F."/>
            <person name="Bowser L."/>
            <person name="Brooks S.Y."/>
            <person name="Carninci P."/>
            <person name="Chao Q."/>
            <person name="Choy N."/>
            <person name="Enju A."/>
            <person name="Goldsmith A.D."/>
            <person name="Gurjal M."/>
            <person name="Hansen N.F."/>
            <person name="Hayashizaki Y."/>
            <person name="Johnson-Hopson C."/>
            <person name="Hsuan V.W."/>
            <person name="Iida K."/>
            <person name="Karnes M."/>
            <person name="Khan S."/>
            <person name="Koesema E."/>
            <person name="Ishida J."/>
            <person name="Jiang P.X."/>
            <person name="Jones T."/>
            <person name="Kawai J."/>
            <person name="Kamiya A."/>
            <person name="Meyers C."/>
            <person name="Nakajima M."/>
            <person name="Narusaka M."/>
            <person name="Seki M."/>
            <person name="Sakurai T."/>
            <person name="Satou M."/>
            <person name="Tamse R."/>
            <person name="Vaysberg M."/>
            <person name="Wallender E.K."/>
            <person name="Wong C."/>
            <person name="Yamamura Y."/>
            <person name="Yuan S."/>
            <person name="Shinozaki K."/>
            <person name="Davis R.W."/>
            <person name="Theologis A."/>
            <person name="Ecker J.R."/>
        </authorList>
    </citation>
    <scope>NUCLEOTIDE SEQUENCE [LARGE SCALE MRNA]</scope>
    <source>
        <strain>cv. Columbia</strain>
    </source>
</reference>
<reference key="5">
    <citation type="journal article" date="2006" name="Mol. Genet. Genomics">
        <title>Genome-wide analysis of the stress associated protein (SAP) gene family containing A20/AN1 zinc-finger(s) in rice and their phylogenetic relationship with Arabidopsis.</title>
        <authorList>
            <person name="Vij S."/>
            <person name="Tyagi A.K."/>
        </authorList>
    </citation>
    <scope>GENE FAMILY</scope>
</reference>
<organism>
    <name type="scientific">Arabidopsis thaliana</name>
    <name type="common">Mouse-ear cress</name>
    <dbReference type="NCBI Taxonomy" id="3702"/>
    <lineage>
        <taxon>Eukaryota</taxon>
        <taxon>Viridiplantae</taxon>
        <taxon>Streptophyta</taxon>
        <taxon>Embryophyta</taxon>
        <taxon>Tracheophyta</taxon>
        <taxon>Spermatophyta</taxon>
        <taxon>Magnoliopsida</taxon>
        <taxon>eudicotyledons</taxon>
        <taxon>Gunneridae</taxon>
        <taxon>Pentapetalae</taxon>
        <taxon>rosids</taxon>
        <taxon>malvids</taxon>
        <taxon>Brassicales</taxon>
        <taxon>Brassicaceae</taxon>
        <taxon>Camelineae</taxon>
        <taxon>Arabidopsis</taxon>
    </lineage>
</organism>
<evidence type="ECO:0000250" key="1"/>
<evidence type="ECO:0000255" key="2">
    <source>
        <dbReference type="PROSITE-ProRule" id="PRU00042"/>
    </source>
</evidence>
<evidence type="ECO:0000255" key="3">
    <source>
        <dbReference type="PROSITE-ProRule" id="PRU00449"/>
    </source>
</evidence>
<evidence type="ECO:0000256" key="4">
    <source>
        <dbReference type="SAM" id="MobiDB-lite"/>
    </source>
</evidence>
<feature type="chain" id="PRO_0000269864" description="Zinc finger AN1 and C2H2 domain-containing stress-associated protein 13">
    <location>
        <begin position="1"/>
        <end position="249"/>
    </location>
</feature>
<feature type="zinc finger region" description="AN1-type 1" evidence="3">
    <location>
        <begin position="7"/>
        <end position="55"/>
    </location>
</feature>
<feature type="zinc finger region" description="AN1-type 2" evidence="3">
    <location>
        <begin position="95"/>
        <end position="145"/>
    </location>
</feature>
<feature type="zinc finger region" description="C2H2-type" evidence="2">
    <location>
        <begin position="220"/>
        <end position="243"/>
    </location>
</feature>
<feature type="region of interest" description="Disordered" evidence="4">
    <location>
        <begin position="194"/>
        <end position="213"/>
    </location>
</feature>
<feature type="compositionally biased region" description="Basic and acidic residues" evidence="4">
    <location>
        <begin position="201"/>
        <end position="210"/>
    </location>
</feature>
<feature type="binding site" evidence="3">
    <location>
        <position position="13"/>
    </location>
    <ligand>
        <name>Zn(2+)</name>
        <dbReference type="ChEBI" id="CHEBI:29105"/>
        <label>1</label>
    </ligand>
</feature>
<feature type="binding site" evidence="3">
    <location>
        <position position="18"/>
    </location>
    <ligand>
        <name>Zn(2+)</name>
        <dbReference type="ChEBI" id="CHEBI:29105"/>
        <label>1</label>
    </ligand>
</feature>
<feature type="binding site" evidence="3">
    <location>
        <position position="28"/>
    </location>
    <ligand>
        <name>Zn(2+)</name>
        <dbReference type="ChEBI" id="CHEBI:29105"/>
        <label>2</label>
    </ligand>
</feature>
<feature type="binding site" evidence="3">
    <location>
        <position position="31"/>
    </location>
    <ligand>
        <name>Zn(2+)</name>
        <dbReference type="ChEBI" id="CHEBI:29105"/>
        <label>2</label>
    </ligand>
</feature>
<feature type="binding site" evidence="3">
    <location>
        <position position="36"/>
    </location>
    <ligand>
        <name>Zn(2+)</name>
        <dbReference type="ChEBI" id="CHEBI:29105"/>
        <label>1</label>
    </ligand>
</feature>
<feature type="binding site" evidence="3">
    <location>
        <position position="39"/>
    </location>
    <ligand>
        <name>Zn(2+)</name>
        <dbReference type="ChEBI" id="CHEBI:29105"/>
        <label>1</label>
    </ligand>
</feature>
<feature type="binding site" evidence="3">
    <location>
        <position position="45"/>
    </location>
    <ligand>
        <name>Zn(2+)</name>
        <dbReference type="ChEBI" id="CHEBI:29105"/>
        <label>2</label>
    </ligand>
</feature>
<feature type="binding site" evidence="3">
    <location>
        <position position="47"/>
    </location>
    <ligand>
        <name>Zn(2+)</name>
        <dbReference type="ChEBI" id="CHEBI:29105"/>
        <label>2</label>
    </ligand>
</feature>
<feature type="binding site" evidence="3">
    <location>
        <position position="101"/>
    </location>
    <ligand>
        <name>Zn(2+)</name>
        <dbReference type="ChEBI" id="CHEBI:29105"/>
        <label>3</label>
    </ligand>
</feature>
<feature type="binding site" evidence="3">
    <location>
        <position position="106"/>
    </location>
    <ligand>
        <name>Zn(2+)</name>
        <dbReference type="ChEBI" id="CHEBI:29105"/>
        <label>3</label>
    </ligand>
</feature>
<feature type="binding site" evidence="3">
    <location>
        <position position="118"/>
    </location>
    <ligand>
        <name>Zn(2+)</name>
        <dbReference type="ChEBI" id="CHEBI:29105"/>
        <label>4</label>
    </ligand>
</feature>
<feature type="binding site" evidence="3">
    <location>
        <position position="121"/>
    </location>
    <ligand>
        <name>Zn(2+)</name>
        <dbReference type="ChEBI" id="CHEBI:29105"/>
        <label>4</label>
    </ligand>
</feature>
<feature type="binding site" evidence="3">
    <location>
        <position position="126"/>
    </location>
    <ligand>
        <name>Zn(2+)</name>
        <dbReference type="ChEBI" id="CHEBI:29105"/>
        <label>3</label>
    </ligand>
</feature>
<feature type="binding site" evidence="3">
    <location>
        <position position="129"/>
    </location>
    <ligand>
        <name>Zn(2+)</name>
        <dbReference type="ChEBI" id="CHEBI:29105"/>
        <label>3</label>
    </ligand>
</feature>
<feature type="binding site" evidence="3">
    <location>
        <position position="135"/>
    </location>
    <ligand>
        <name>Zn(2+)</name>
        <dbReference type="ChEBI" id="CHEBI:29105"/>
        <label>4</label>
    </ligand>
</feature>
<feature type="binding site" evidence="3">
    <location>
        <position position="137"/>
    </location>
    <ligand>
        <name>Zn(2+)</name>
        <dbReference type="ChEBI" id="CHEBI:29105"/>
        <label>4</label>
    </ligand>
</feature>
<comment type="function">
    <text evidence="1">May be involved in environmental stress response.</text>
</comment>
<gene>
    <name type="primary">SAP13</name>
    <name type="ordered locus">At3g57480</name>
    <name type="ORF">T8H10.80</name>
</gene>